<proteinExistence type="evidence at protein level"/>
<evidence type="ECO:0000250" key="1">
    <source>
        <dbReference type="UniProtKB" id="Q65CL1"/>
    </source>
</evidence>
<evidence type="ECO:0000255" key="2"/>
<evidence type="ECO:0000269" key="3">
    <source>
    </source>
</evidence>
<evidence type="ECO:0000269" key="4">
    <source>
    </source>
</evidence>
<evidence type="ECO:0000269" key="5">
    <source>
    </source>
</evidence>
<evidence type="ECO:0000303" key="6">
    <source>
    </source>
</evidence>
<evidence type="ECO:0000303" key="7">
    <source>
    </source>
</evidence>
<evidence type="ECO:0000305" key="8"/>
<evidence type="ECO:0000312" key="9">
    <source>
        <dbReference type="EMBL" id="AAF21801.1"/>
    </source>
</evidence>
<evidence type="ECO:0000312" key="10">
    <source>
        <dbReference type="EMBL" id="AAH65819.1"/>
    </source>
</evidence>
<evidence type="ECO:0000312" key="11">
    <source>
        <dbReference type="EMBL" id="AAQ14328.1"/>
    </source>
</evidence>
<evidence type="ECO:0000312" key="12">
    <source>
        <dbReference type="EMBL" id="AL731549"/>
    </source>
</evidence>
<evidence type="ECO:0000312" key="13">
    <source>
        <dbReference type="HGNC" id="HGNC:2511"/>
    </source>
</evidence>
<evidence type="ECO:0007744" key="14">
    <source>
    </source>
</evidence>
<evidence type="ECO:0007744" key="15">
    <source>
    </source>
</evidence>
<keyword id="KW-0025">Alternative splicing</keyword>
<keyword id="KW-0122">Cardiomyopathy</keyword>
<keyword id="KW-0130">Cell adhesion</keyword>
<keyword id="KW-0965">Cell junction</keyword>
<keyword id="KW-0175">Coiled coil</keyword>
<keyword id="KW-0963">Cytoplasm</keyword>
<keyword id="KW-0206">Cytoskeleton</keyword>
<keyword id="KW-0225">Disease variant</keyword>
<keyword id="KW-0597">Phosphoprotein</keyword>
<keyword id="KW-1267">Proteomics identification</keyword>
<keyword id="KW-1185">Reference proteome</keyword>
<protein>
    <recommendedName>
        <fullName>Catenin alpha-3</fullName>
    </recommendedName>
    <alternativeName>
        <fullName>Alpha T-catenin</fullName>
    </alternativeName>
    <alternativeName>
        <fullName>Cadherin-associated protein</fullName>
    </alternativeName>
</protein>
<reference evidence="8 9" key="1">
    <citation type="journal article" date="2001" name="J. Cell Sci.">
        <title>AlphaT-catenin: a novel tissue-specific beta-catenin-binding protein mediating strong cell-cell adhesion.</title>
        <authorList>
            <person name="Janssens B."/>
            <person name="Goossens S."/>
            <person name="Staes K."/>
            <person name="Gilbert B."/>
            <person name="van Hengel J."/>
            <person name="Colpaert C."/>
            <person name="Bruyneel E."/>
            <person name="Mareel M."/>
            <person name="van Roy F."/>
        </authorList>
    </citation>
    <scope>NUCLEOTIDE SEQUENCE [MRNA] (ISOFORM 1)</scope>
    <scope>FUNCTION</scope>
    <scope>INTERACTION WITH CTNNB1</scope>
    <scope>SUBCELLULAR LOCATION</scope>
    <scope>TISSUE SPECIFICITY</scope>
    <source>
        <tissue evidence="3">Testis</tissue>
    </source>
</reference>
<reference evidence="8 11" key="2">
    <citation type="journal article" date="2003" name="Hum. Genet.">
        <title>Assessment of the CTNNA3 gene encoding human alpha T-catenin regarding its involvement in dilated cardiomyopathy.</title>
        <authorList>
            <person name="Janssens B."/>
            <person name="Mohapatra B."/>
            <person name="Vatta M."/>
            <person name="Goossens S."/>
            <person name="Vanpoucke G."/>
            <person name="Kools P."/>
            <person name="Montoye T."/>
            <person name="van Hengel J."/>
            <person name="Bowles N.E."/>
            <person name="van Roy F."/>
            <person name="Towbin J.A."/>
        </authorList>
    </citation>
    <scope>NUCLEOTIDE SEQUENCE [GENOMIC DNA] (ISOFORM 1)</scope>
</reference>
<reference evidence="12" key="3">
    <citation type="journal article" date="2004" name="Nature">
        <title>The DNA sequence and comparative analysis of human chromosome 10.</title>
        <authorList>
            <person name="Deloukas P."/>
            <person name="Earthrowl M.E."/>
            <person name="Grafham D.V."/>
            <person name="Rubenfield M."/>
            <person name="French L."/>
            <person name="Steward C.A."/>
            <person name="Sims S.K."/>
            <person name="Jones M.C."/>
            <person name="Searle S."/>
            <person name="Scott C."/>
            <person name="Howe K."/>
            <person name="Hunt S.E."/>
            <person name="Andrews T.D."/>
            <person name="Gilbert J.G.R."/>
            <person name="Swarbreck D."/>
            <person name="Ashurst J.L."/>
            <person name="Taylor A."/>
            <person name="Battles J."/>
            <person name="Bird C.P."/>
            <person name="Ainscough R."/>
            <person name="Almeida J.P."/>
            <person name="Ashwell R.I.S."/>
            <person name="Ambrose K.D."/>
            <person name="Babbage A.K."/>
            <person name="Bagguley C.L."/>
            <person name="Bailey J."/>
            <person name="Banerjee R."/>
            <person name="Bates K."/>
            <person name="Beasley H."/>
            <person name="Bray-Allen S."/>
            <person name="Brown A.J."/>
            <person name="Brown J.Y."/>
            <person name="Burford D.C."/>
            <person name="Burrill W."/>
            <person name="Burton J."/>
            <person name="Cahill P."/>
            <person name="Camire D."/>
            <person name="Carter N.P."/>
            <person name="Chapman J.C."/>
            <person name="Clark S.Y."/>
            <person name="Clarke G."/>
            <person name="Clee C.M."/>
            <person name="Clegg S."/>
            <person name="Corby N."/>
            <person name="Coulson A."/>
            <person name="Dhami P."/>
            <person name="Dutta I."/>
            <person name="Dunn M."/>
            <person name="Faulkner L."/>
            <person name="Frankish A."/>
            <person name="Frankland J.A."/>
            <person name="Garner P."/>
            <person name="Garnett J."/>
            <person name="Gribble S."/>
            <person name="Griffiths C."/>
            <person name="Grocock R."/>
            <person name="Gustafson E."/>
            <person name="Hammond S."/>
            <person name="Harley J.L."/>
            <person name="Hart E."/>
            <person name="Heath P.D."/>
            <person name="Ho T.P."/>
            <person name="Hopkins B."/>
            <person name="Horne J."/>
            <person name="Howden P.J."/>
            <person name="Huckle E."/>
            <person name="Hynds C."/>
            <person name="Johnson C."/>
            <person name="Johnson D."/>
            <person name="Kana A."/>
            <person name="Kay M."/>
            <person name="Kimberley A.M."/>
            <person name="Kershaw J.K."/>
            <person name="Kokkinaki M."/>
            <person name="Laird G.K."/>
            <person name="Lawlor S."/>
            <person name="Lee H.M."/>
            <person name="Leongamornlert D.A."/>
            <person name="Laird G."/>
            <person name="Lloyd C."/>
            <person name="Lloyd D.M."/>
            <person name="Loveland J."/>
            <person name="Lovell J."/>
            <person name="McLaren S."/>
            <person name="McLay K.E."/>
            <person name="McMurray A."/>
            <person name="Mashreghi-Mohammadi M."/>
            <person name="Matthews L."/>
            <person name="Milne S."/>
            <person name="Nickerson T."/>
            <person name="Nguyen M."/>
            <person name="Overton-Larty E."/>
            <person name="Palmer S.A."/>
            <person name="Pearce A.V."/>
            <person name="Peck A.I."/>
            <person name="Pelan S."/>
            <person name="Phillimore B."/>
            <person name="Porter K."/>
            <person name="Rice C.M."/>
            <person name="Rogosin A."/>
            <person name="Ross M.T."/>
            <person name="Sarafidou T."/>
            <person name="Sehra H.K."/>
            <person name="Shownkeen R."/>
            <person name="Skuce C.D."/>
            <person name="Smith M."/>
            <person name="Standring L."/>
            <person name="Sycamore N."/>
            <person name="Tester J."/>
            <person name="Thorpe A."/>
            <person name="Torcasso W."/>
            <person name="Tracey A."/>
            <person name="Tromans A."/>
            <person name="Tsolas J."/>
            <person name="Wall M."/>
            <person name="Walsh J."/>
            <person name="Wang H."/>
            <person name="Weinstock K."/>
            <person name="West A.P."/>
            <person name="Willey D.L."/>
            <person name="Whitehead S.L."/>
            <person name="Wilming L."/>
            <person name="Wray P.W."/>
            <person name="Young L."/>
            <person name="Chen Y."/>
            <person name="Lovering R.C."/>
            <person name="Moschonas N.K."/>
            <person name="Siebert R."/>
            <person name="Fechtel K."/>
            <person name="Bentley D."/>
            <person name="Durbin R.M."/>
            <person name="Hubbard T."/>
            <person name="Doucette-Stamm L."/>
            <person name="Beck S."/>
            <person name="Smith D.R."/>
            <person name="Rogers J."/>
        </authorList>
    </citation>
    <scope>NUCLEOTIDE SEQUENCE [LARGE SCALE GENOMIC DNA]</scope>
</reference>
<reference evidence="8 10" key="4">
    <citation type="journal article" date="2004" name="Genome Res.">
        <title>The status, quality, and expansion of the NIH full-length cDNA project: the Mammalian Gene Collection (MGC).</title>
        <authorList>
            <consortium name="The MGC Project Team"/>
        </authorList>
    </citation>
    <scope>NUCLEOTIDE SEQUENCE [LARGE SCALE MRNA] (ISOFORM 2)</scope>
    <source>
        <tissue evidence="10">PNS</tissue>
    </source>
</reference>
<reference key="5">
    <citation type="journal article" date="2007" name="J. Cell Sci.">
        <title>A unique and specific interaction between alphaT-catenin and plakophilin-2 in the area composita, the mixed-type junctional structure of cardiac intercalated discs.</title>
        <authorList>
            <person name="Goossens S."/>
            <person name="Janssens B."/>
            <person name="Bonne S."/>
            <person name="De Rycke R."/>
            <person name="Braet F."/>
            <person name="van Hengel J."/>
            <person name="van Roy F."/>
        </authorList>
    </citation>
    <scope>INTERACTION WITH PKP2</scope>
</reference>
<reference key="6">
    <citation type="journal article" date="2008" name="Proteomics">
        <title>Large-scale phosphoproteome analysis of human liver tissue by enrichment and fractionation of phosphopeptides with strong anion exchange chromatography.</title>
        <authorList>
            <person name="Han G."/>
            <person name="Ye M."/>
            <person name="Zhou H."/>
            <person name="Jiang X."/>
            <person name="Feng S."/>
            <person name="Jiang X."/>
            <person name="Tian R."/>
            <person name="Wan D."/>
            <person name="Zou H."/>
            <person name="Gu J."/>
        </authorList>
    </citation>
    <scope>PHOSPHORYLATION [LARGE SCALE ANALYSIS] AT SER-637</scope>
    <scope>IDENTIFICATION BY MASS SPECTROMETRY [LARGE SCALE ANALYSIS]</scope>
    <source>
        <tissue>Liver</tissue>
    </source>
</reference>
<reference key="7">
    <citation type="journal article" date="2014" name="J. Proteomics">
        <title>An enzyme assisted RP-RPLC approach for in-depth analysis of human liver phosphoproteome.</title>
        <authorList>
            <person name="Bian Y."/>
            <person name="Song C."/>
            <person name="Cheng K."/>
            <person name="Dong M."/>
            <person name="Wang F."/>
            <person name="Huang J."/>
            <person name="Sun D."/>
            <person name="Wang L."/>
            <person name="Ye M."/>
            <person name="Zou H."/>
        </authorList>
    </citation>
    <scope>PHOSPHORYLATION [LARGE SCALE ANALYSIS] AT SER-56 AND SER-637</scope>
    <scope>IDENTIFICATION BY MASS SPECTROMETRY [LARGE SCALE ANALYSIS]</scope>
    <source>
        <tissue>Liver</tissue>
    </source>
</reference>
<reference key="8">
    <citation type="journal article" date="2013" name="Eur. Heart J.">
        <title>Mutations in the area composita protein alphaT-catenin are associated with arrhythmogenic right ventricular cardiomyopathy.</title>
        <authorList>
            <person name="van Hengel J."/>
            <person name="Calore M."/>
            <person name="Bauce B."/>
            <person name="Dazzo E."/>
            <person name="Mazzotti E."/>
            <person name="De Bortoli M."/>
            <person name="Lorenzon A."/>
            <person name="Li Mura I.E."/>
            <person name="Beffagna G."/>
            <person name="Rigato I."/>
            <person name="Vleeschouwers M."/>
            <person name="Tyberghein K."/>
            <person name="Hulpiau P."/>
            <person name="van Hamme E."/>
            <person name="Zaglia T."/>
            <person name="Corrado D."/>
            <person name="Basso C."/>
            <person name="Thiene G."/>
            <person name="Daliento L."/>
            <person name="Nava A."/>
            <person name="van Roy F."/>
            <person name="Rampazzo A."/>
        </authorList>
    </citation>
    <scope>VARIANT ARVD13 ASP-94</scope>
</reference>
<dbReference type="EMBL" id="AF091606">
    <property type="protein sequence ID" value="AAF21801.1"/>
    <property type="molecule type" value="mRNA"/>
</dbReference>
<dbReference type="EMBL" id="AF282692">
    <property type="protein sequence ID" value="AAQ14328.1"/>
    <property type="molecule type" value="Genomic_DNA"/>
</dbReference>
<dbReference type="EMBL" id="AF282679">
    <property type="protein sequence ID" value="AAQ14328.1"/>
    <property type="status" value="JOINED"/>
    <property type="molecule type" value="Genomic_DNA"/>
</dbReference>
<dbReference type="EMBL" id="AF282680">
    <property type="protein sequence ID" value="AAQ14328.1"/>
    <property type="status" value="JOINED"/>
    <property type="molecule type" value="Genomic_DNA"/>
</dbReference>
<dbReference type="EMBL" id="AF282681">
    <property type="protein sequence ID" value="AAQ14328.1"/>
    <property type="status" value="JOINED"/>
    <property type="molecule type" value="Genomic_DNA"/>
</dbReference>
<dbReference type="EMBL" id="AF282683">
    <property type="protein sequence ID" value="AAQ14328.1"/>
    <property type="status" value="JOINED"/>
    <property type="molecule type" value="Genomic_DNA"/>
</dbReference>
<dbReference type="EMBL" id="AF282685">
    <property type="protein sequence ID" value="AAQ14328.1"/>
    <property type="status" value="JOINED"/>
    <property type="molecule type" value="Genomic_DNA"/>
</dbReference>
<dbReference type="EMBL" id="AF282689">
    <property type="protein sequence ID" value="AAQ14328.1"/>
    <property type="status" value="JOINED"/>
    <property type="molecule type" value="Genomic_DNA"/>
</dbReference>
<dbReference type="EMBL" id="AF391793">
    <property type="protein sequence ID" value="AAQ14328.1"/>
    <property type="status" value="JOINED"/>
    <property type="molecule type" value="Genomic_DNA"/>
</dbReference>
<dbReference type="EMBL" id="AF282686">
    <property type="protein sequence ID" value="AAQ14328.1"/>
    <property type="status" value="JOINED"/>
    <property type="molecule type" value="Genomic_DNA"/>
</dbReference>
<dbReference type="EMBL" id="AF282688">
    <property type="protein sequence ID" value="AAQ14328.1"/>
    <property type="status" value="JOINED"/>
    <property type="molecule type" value="Genomic_DNA"/>
</dbReference>
<dbReference type="EMBL" id="AF282690">
    <property type="protein sequence ID" value="AAQ14328.1"/>
    <property type="status" value="JOINED"/>
    <property type="molecule type" value="Genomic_DNA"/>
</dbReference>
<dbReference type="EMBL" id="AF282691">
    <property type="protein sequence ID" value="AAQ14328.1"/>
    <property type="status" value="JOINED"/>
    <property type="molecule type" value="Genomic_DNA"/>
</dbReference>
<dbReference type="EMBL" id="AF391792">
    <property type="protein sequence ID" value="AAQ14328.1"/>
    <property type="status" value="JOINED"/>
    <property type="molecule type" value="Genomic_DNA"/>
</dbReference>
<dbReference type="EMBL" id="AF391794">
    <property type="protein sequence ID" value="AAQ14328.1"/>
    <property type="status" value="JOINED"/>
    <property type="molecule type" value="Genomic_DNA"/>
</dbReference>
<dbReference type="EMBL" id="AF282687">
    <property type="protein sequence ID" value="AAQ14328.1"/>
    <property type="status" value="JOINED"/>
    <property type="molecule type" value="Genomic_DNA"/>
</dbReference>
<dbReference type="EMBL" id="AF282682">
    <property type="protein sequence ID" value="AAQ14328.1"/>
    <property type="status" value="JOINED"/>
    <property type="molecule type" value="Genomic_DNA"/>
</dbReference>
<dbReference type="EMBL" id="AF282684">
    <property type="protein sequence ID" value="AAQ14328.1"/>
    <property type="status" value="JOINED"/>
    <property type="molecule type" value="Genomic_DNA"/>
</dbReference>
<dbReference type="EMBL" id="AC016819">
    <property type="status" value="NOT_ANNOTATED_CDS"/>
    <property type="molecule type" value="Genomic_DNA"/>
</dbReference>
<dbReference type="EMBL" id="AC018979">
    <property type="status" value="NOT_ANNOTATED_CDS"/>
    <property type="molecule type" value="Genomic_DNA"/>
</dbReference>
<dbReference type="EMBL" id="AC020642">
    <property type="status" value="NOT_ANNOTATED_CDS"/>
    <property type="molecule type" value="Genomic_DNA"/>
</dbReference>
<dbReference type="EMBL" id="AC022017">
    <property type="status" value="NOT_ANNOTATED_CDS"/>
    <property type="molecule type" value="Genomic_DNA"/>
</dbReference>
<dbReference type="EMBL" id="AC022401">
    <property type="status" value="NOT_ANNOTATED_CDS"/>
    <property type="molecule type" value="Genomic_DNA"/>
</dbReference>
<dbReference type="EMBL" id="AC026394">
    <property type="status" value="NOT_ANNOTATED_CDS"/>
    <property type="molecule type" value="Genomic_DNA"/>
</dbReference>
<dbReference type="EMBL" id="AL607022">
    <property type="status" value="NOT_ANNOTATED_CDS"/>
    <property type="molecule type" value="Genomic_DNA"/>
</dbReference>
<dbReference type="EMBL" id="AL607023">
    <property type="status" value="NOT_ANNOTATED_CDS"/>
    <property type="molecule type" value="Genomic_DNA"/>
</dbReference>
<dbReference type="EMBL" id="AL731538">
    <property type="status" value="NOT_ANNOTATED_CDS"/>
    <property type="molecule type" value="Genomic_DNA"/>
</dbReference>
<dbReference type="EMBL" id="AL731549">
    <property type="status" value="NOT_ANNOTATED_CDS"/>
    <property type="molecule type" value="Genomic_DNA"/>
</dbReference>
<dbReference type="EMBL" id="BC065819">
    <property type="protein sequence ID" value="AAH65819.1"/>
    <property type="molecule type" value="mRNA"/>
</dbReference>
<dbReference type="CCDS" id="CCDS7269.1">
    <molecule id="Q9UI47-1"/>
</dbReference>
<dbReference type="RefSeq" id="NP_001120856.1">
    <molecule id="Q9UI47-1"/>
    <property type="nucleotide sequence ID" value="NM_001127384.3"/>
</dbReference>
<dbReference type="RefSeq" id="NP_037398.2">
    <molecule id="Q9UI47-1"/>
    <property type="nucleotide sequence ID" value="NM_013266.4"/>
</dbReference>
<dbReference type="SMR" id="Q9UI47"/>
<dbReference type="BioGRID" id="118885">
    <property type="interactions" value="118"/>
</dbReference>
<dbReference type="FunCoup" id="Q9UI47">
    <property type="interactions" value="343"/>
</dbReference>
<dbReference type="IntAct" id="Q9UI47">
    <property type="interactions" value="116"/>
</dbReference>
<dbReference type="STRING" id="9606.ENSP00000389714"/>
<dbReference type="GlyGen" id="Q9UI47">
    <property type="glycosylation" value="1 site, 1 O-linked glycan (1 site)"/>
</dbReference>
<dbReference type="iPTMnet" id="Q9UI47"/>
<dbReference type="PhosphoSitePlus" id="Q9UI47"/>
<dbReference type="SwissPalm" id="Q9UI47"/>
<dbReference type="BioMuta" id="CTNNA3"/>
<dbReference type="DMDM" id="78099215"/>
<dbReference type="jPOST" id="Q9UI47"/>
<dbReference type="MassIVE" id="Q9UI47"/>
<dbReference type="PaxDb" id="9606-ENSP00000389714"/>
<dbReference type="PeptideAtlas" id="Q9UI47"/>
<dbReference type="ProteomicsDB" id="84475">
    <molecule id="Q9UI47-1"/>
</dbReference>
<dbReference type="ProteomicsDB" id="84476">
    <molecule id="Q9UI47-2"/>
</dbReference>
<dbReference type="Antibodypedia" id="2926">
    <property type="antibodies" value="192 antibodies from 30 providers"/>
</dbReference>
<dbReference type="DNASU" id="29119"/>
<dbReference type="Ensembl" id="ENST00000433211.7">
    <molecule id="Q9UI47-1"/>
    <property type="protein sequence ID" value="ENSP00000389714.1"/>
    <property type="gene ID" value="ENSG00000183230.18"/>
</dbReference>
<dbReference type="Ensembl" id="ENST00000682758.1">
    <molecule id="Q9UI47-1"/>
    <property type="protein sequence ID" value="ENSP00000508047.1"/>
    <property type="gene ID" value="ENSG00000183230.18"/>
</dbReference>
<dbReference type="Ensembl" id="ENST00000684154.1">
    <molecule id="Q9UI47-1"/>
    <property type="protein sequence ID" value="ENSP00000508371.1"/>
    <property type="gene ID" value="ENSG00000183230.18"/>
</dbReference>
<dbReference type="GeneID" id="29119"/>
<dbReference type="KEGG" id="hsa:29119"/>
<dbReference type="MANE-Select" id="ENST00000433211.7">
    <property type="protein sequence ID" value="ENSP00000389714.1"/>
    <property type="RefSeq nucleotide sequence ID" value="NM_013266.4"/>
    <property type="RefSeq protein sequence ID" value="NP_037398.2"/>
</dbReference>
<dbReference type="UCSC" id="uc001jmw.3">
    <molecule id="Q9UI47-1"/>
    <property type="organism name" value="human"/>
</dbReference>
<dbReference type="AGR" id="HGNC:2511"/>
<dbReference type="CTD" id="29119"/>
<dbReference type="DisGeNET" id="29119"/>
<dbReference type="GeneCards" id="CTNNA3"/>
<dbReference type="HGNC" id="HGNC:2511">
    <property type="gene designation" value="CTNNA3"/>
</dbReference>
<dbReference type="HPA" id="ENSG00000183230">
    <property type="expression patterns" value="Group enriched (brain, heart muscle, skeletal muscle, tongue)"/>
</dbReference>
<dbReference type="MalaCards" id="CTNNA3"/>
<dbReference type="MIM" id="607667">
    <property type="type" value="gene"/>
</dbReference>
<dbReference type="MIM" id="615616">
    <property type="type" value="phenotype"/>
</dbReference>
<dbReference type="neXtProt" id="NX_Q9UI47"/>
<dbReference type="OpenTargets" id="ENSG00000183230"/>
<dbReference type="Orphanet" id="293888">
    <property type="disease" value="Inherited isolated arrhythmogenic cardiomyopathy, dominant-left variant"/>
</dbReference>
<dbReference type="Orphanet" id="293910">
    <property type="disease" value="Inherited isolated arrhythmogenic cardiomyopathy, dominant-right variant"/>
</dbReference>
<dbReference type="Orphanet" id="293899">
    <property type="disease" value="Inherited isolated arrhythmogenic ventricular dysplasia, biventricular variant"/>
</dbReference>
<dbReference type="PharmGKB" id="PA27010"/>
<dbReference type="VEuPathDB" id="HostDB:ENSG00000183230"/>
<dbReference type="eggNOG" id="KOG3681">
    <property type="taxonomic scope" value="Eukaryota"/>
</dbReference>
<dbReference type="GeneTree" id="ENSGT01030000234543"/>
<dbReference type="HOGENOM" id="CLU_015314_2_0_1"/>
<dbReference type="InParanoid" id="Q9UI47"/>
<dbReference type="OMA" id="TWENYIH"/>
<dbReference type="OrthoDB" id="6376697at2759"/>
<dbReference type="PAN-GO" id="Q9UI47">
    <property type="GO annotations" value="6 GO annotations based on evolutionary models"/>
</dbReference>
<dbReference type="PhylomeDB" id="Q9UI47"/>
<dbReference type="TreeFam" id="TF313686"/>
<dbReference type="PathwayCommons" id="Q9UI47"/>
<dbReference type="SignaLink" id="Q9UI47"/>
<dbReference type="SIGNOR" id="Q9UI47"/>
<dbReference type="BioGRID-ORCS" id="29119">
    <property type="hits" value="10 hits in 1148 CRISPR screens"/>
</dbReference>
<dbReference type="ChiTaRS" id="CTNNA3">
    <property type="organism name" value="human"/>
</dbReference>
<dbReference type="GenomeRNAi" id="29119"/>
<dbReference type="Pharos" id="Q9UI47">
    <property type="development level" value="Tbio"/>
</dbReference>
<dbReference type="PRO" id="PR:Q9UI47"/>
<dbReference type="Proteomes" id="UP000005640">
    <property type="component" value="Chromosome 10"/>
</dbReference>
<dbReference type="RNAct" id="Q9UI47">
    <property type="molecule type" value="protein"/>
</dbReference>
<dbReference type="Bgee" id="ENSG00000183230">
    <property type="expression patterns" value="Expressed in corpus callosum and 153 other cell types or tissues"/>
</dbReference>
<dbReference type="ExpressionAtlas" id="Q9UI47">
    <property type="expression patterns" value="baseline and differential"/>
</dbReference>
<dbReference type="GO" id="GO:0005912">
    <property type="term" value="C:adherens junction"/>
    <property type="evidence" value="ECO:0000318"/>
    <property type="project" value="GO_Central"/>
</dbReference>
<dbReference type="GO" id="GO:0005737">
    <property type="term" value="C:cytoplasm"/>
    <property type="evidence" value="ECO:0007669"/>
    <property type="project" value="UniProtKB-KW"/>
</dbReference>
<dbReference type="GO" id="GO:0005856">
    <property type="term" value="C:cytoskeleton"/>
    <property type="evidence" value="ECO:0007669"/>
    <property type="project" value="UniProtKB-SubCell"/>
</dbReference>
<dbReference type="GO" id="GO:0030057">
    <property type="term" value="C:desmosome"/>
    <property type="evidence" value="ECO:0007669"/>
    <property type="project" value="UniProtKB-SubCell"/>
</dbReference>
<dbReference type="GO" id="GO:0005916">
    <property type="term" value="C:fascia adherens"/>
    <property type="evidence" value="ECO:0000314"/>
    <property type="project" value="UniProtKB"/>
</dbReference>
<dbReference type="GO" id="GO:0030027">
    <property type="term" value="C:lamellipodium"/>
    <property type="evidence" value="ECO:0007669"/>
    <property type="project" value="Ensembl"/>
</dbReference>
<dbReference type="GO" id="GO:0051015">
    <property type="term" value="F:actin filament binding"/>
    <property type="evidence" value="ECO:0000318"/>
    <property type="project" value="GO_Central"/>
</dbReference>
<dbReference type="GO" id="GO:0008013">
    <property type="term" value="F:beta-catenin binding"/>
    <property type="evidence" value="ECO:0000353"/>
    <property type="project" value="BHF-UCL"/>
</dbReference>
<dbReference type="GO" id="GO:0045296">
    <property type="term" value="F:cadherin binding"/>
    <property type="evidence" value="ECO:0000304"/>
    <property type="project" value="UniProtKB"/>
</dbReference>
<dbReference type="GO" id="GO:0086073">
    <property type="term" value="P:bundle of His cell-Purkinje myocyte adhesion involved in cell communication"/>
    <property type="evidence" value="ECO:0000315"/>
    <property type="project" value="BHF-UCL"/>
</dbReference>
<dbReference type="GO" id="GO:0016477">
    <property type="term" value="P:cell migration"/>
    <property type="evidence" value="ECO:0000318"/>
    <property type="project" value="GO_Central"/>
</dbReference>
<dbReference type="GO" id="GO:0098609">
    <property type="term" value="P:cell-cell adhesion"/>
    <property type="evidence" value="ECO:0000353"/>
    <property type="project" value="UniProtKB"/>
</dbReference>
<dbReference type="GO" id="GO:0086091">
    <property type="term" value="P:regulation of heart rate by cardiac conduction"/>
    <property type="evidence" value="ECO:0000315"/>
    <property type="project" value="BHF-UCL"/>
</dbReference>
<dbReference type="GO" id="GO:0098911">
    <property type="term" value="P:regulation of ventricular cardiac muscle cell action potential"/>
    <property type="evidence" value="ECO:0000315"/>
    <property type="project" value="BHF-UCL"/>
</dbReference>
<dbReference type="FunFam" id="1.20.120.230:FF:000007">
    <property type="entry name" value="Catenin alpha 1"/>
    <property type="match status" value="1"/>
</dbReference>
<dbReference type="FunFam" id="1.20.120.230:FF:000008">
    <property type="entry name" value="Catenin alpha 1"/>
    <property type="match status" value="1"/>
</dbReference>
<dbReference type="FunFam" id="1.20.120.230:FF:000011">
    <property type="entry name" value="Catenin alpha 1"/>
    <property type="match status" value="1"/>
</dbReference>
<dbReference type="FunFam" id="1.20.120.230:FF:000019">
    <property type="entry name" value="Catenin alpha 3"/>
    <property type="match status" value="1"/>
</dbReference>
<dbReference type="Gene3D" id="6.10.250.2510">
    <property type="match status" value="1"/>
</dbReference>
<dbReference type="Gene3D" id="1.20.120.230">
    <property type="entry name" value="Alpha-catenin/vinculin-like"/>
    <property type="match status" value="5"/>
</dbReference>
<dbReference type="InterPro" id="IPR036723">
    <property type="entry name" value="Alpha-catenin/vinculin-like_sf"/>
</dbReference>
<dbReference type="InterPro" id="IPR001033">
    <property type="entry name" value="Alpha_catenin"/>
</dbReference>
<dbReference type="InterPro" id="IPR006077">
    <property type="entry name" value="Vinculin/catenin"/>
</dbReference>
<dbReference type="PANTHER" id="PTHR18914">
    <property type="entry name" value="ALPHA CATENIN"/>
    <property type="match status" value="1"/>
</dbReference>
<dbReference type="PANTHER" id="PTHR18914:SF21">
    <property type="entry name" value="CATENIN ALPHA-3"/>
    <property type="match status" value="1"/>
</dbReference>
<dbReference type="Pfam" id="PF01044">
    <property type="entry name" value="Vinculin"/>
    <property type="match status" value="1"/>
</dbReference>
<dbReference type="PRINTS" id="PR00805">
    <property type="entry name" value="ALPHACATENIN"/>
</dbReference>
<dbReference type="SUPFAM" id="SSF47220">
    <property type="entry name" value="alpha-catenin/vinculin-like"/>
    <property type="match status" value="4"/>
</dbReference>
<feature type="chain" id="PRO_0000064266" description="Catenin alpha-3">
    <location>
        <begin position="1"/>
        <end position="895"/>
    </location>
</feature>
<feature type="coiled-coil region" evidence="2">
    <location>
        <begin position="74"/>
        <end position="111"/>
    </location>
</feature>
<feature type="coiled-coil region" evidence="2">
    <location>
        <begin position="325"/>
        <end position="379"/>
    </location>
</feature>
<feature type="modified residue" description="Phosphoserine" evidence="15">
    <location>
        <position position="56"/>
    </location>
</feature>
<feature type="modified residue" description="Phosphoserine" evidence="1">
    <location>
        <position position="160"/>
    </location>
</feature>
<feature type="modified residue" description="Phosphoserine" evidence="14 15">
    <location>
        <position position="637"/>
    </location>
</feature>
<feature type="modified residue" description="Phosphoserine" evidence="1">
    <location>
        <position position="647"/>
    </location>
</feature>
<feature type="modified residue" description="Phosphothreonine" evidence="1">
    <location>
        <position position="649"/>
    </location>
</feature>
<feature type="splice variant" id="VSP_051852" description="In isoform 2." evidence="7">
    <original>ESHILE</original>
    <variation>GMFLFF</variation>
    <location>
        <begin position="511"/>
        <end position="516"/>
    </location>
</feature>
<feature type="splice variant" id="VSP_051853" description="In isoform 2." evidence="7">
    <location>
        <begin position="517"/>
        <end position="895"/>
    </location>
</feature>
<feature type="sequence variant" id="VAR_070998" description="In ARVD13; dbSNP:rs587777134." evidence="5">
    <original>V</original>
    <variation>D</variation>
    <location>
        <position position="94"/>
    </location>
</feature>
<feature type="sequence variant" id="VAR_062093" description="In dbSNP:rs41274090.">
    <original>R</original>
    <variation>C</variation>
    <location>
        <position position="535"/>
    </location>
</feature>
<feature type="sequence variant" id="VAR_053369" description="In dbSNP:rs4548513.">
    <original>S</original>
    <variation>N</variation>
    <location>
        <position position="596"/>
    </location>
</feature>
<feature type="sequence conflict" description="In Ref. 1 and 2." evidence="8" ref="1 2">
    <original>S</original>
    <variation>T</variation>
    <location>
        <position position="160"/>
    </location>
</feature>
<gene>
    <name evidence="9 13" type="primary">CTNNA3</name>
</gene>
<sequence length="895" mass="99809">MSAETPITLNIDPQDLQVQTFTVEKLLEPLIIQVTTLVNCPQNPSSRKKGRSKRASVLLASVEEATWNLLDKGEKIAQEATVLKDELTASLEEVRKESEALKVSAERFTDDPCFLPKREAVVQAARALLAAVTRLLILADMIDVMCLLQHVSAFQRTFESLKNVANKSDLQKTYQKLGKELENLDYLAFKRQQDLKSPNQRDEIAGARASLKENSPLLHSICSACLEHSDVASLKASKDTVCEEIQNALNVISNASQGIQNMTTPPEPQAATLGSALDELENLIVLNPLTVTEEEIRPSLEKRLEAIISGAALLADSSCTRDLHRERIIAECNAIRQALQDLLSEYMNNAGKKERSNTLNIALDNMCKKTRDLRRQLRKAIIDHVSDSFLDTTVPLLVLIEAAKNGREKEIKEYAAIFHEHTSRLVEVANLACSMSTNEDGIKIVKIAANHLETLCPQIINAALALAARPKSQAVKNTMEMYKRTWENHIHVLTEAVDDITSIDDFLAVSESHILEDVNKCIIALRDQDADNLDRAAGAIRGRAARVAHIVTGEMDSYEPGAYTEGVMRNVNFLTSTVIPEFVTQVNVALEALSKSSLNVLDDNQFVDISKKIYDTIHDIRCSVMMIRTPEELEDVSDLEEEHEVRSHTSIQTEGKTDRAKMTQLPEAEKEKIAEQVADFKKVKSKLDAEIEIWDDTSNDIIVLAKNMCMIMMEMTDFTRGKGPLKHTTDVIYAAKMISESGSRMDVLARQIANQCPDPSCKQDLLAYLEQIKFYSHQLKICSQVKAEIQNLGGELIMSALDSVTSLIQAAKNLMNAVVQTVKMSYIASTKIIRIQSPAGPRHPVVMWRMKAPAKKPLIKREKPEETCAAVRRGSAKKKIHPLQVMSEFRGRQIY</sequence>
<accession>Q9UI47</accession>
<accession>Q5VSR2</accession>
<accession>Q6P056</accession>
<organism>
    <name type="scientific">Homo sapiens</name>
    <name type="common">Human</name>
    <dbReference type="NCBI Taxonomy" id="9606"/>
    <lineage>
        <taxon>Eukaryota</taxon>
        <taxon>Metazoa</taxon>
        <taxon>Chordata</taxon>
        <taxon>Craniata</taxon>
        <taxon>Vertebrata</taxon>
        <taxon>Euteleostomi</taxon>
        <taxon>Mammalia</taxon>
        <taxon>Eutheria</taxon>
        <taxon>Euarchontoglires</taxon>
        <taxon>Primates</taxon>
        <taxon>Haplorrhini</taxon>
        <taxon>Catarrhini</taxon>
        <taxon>Hominidae</taxon>
        <taxon>Homo</taxon>
    </lineage>
</organism>
<name>CTNA3_HUMAN</name>
<comment type="function">
    <text evidence="6">May be involved in formation of stretch-resistant cell-cell adhesion complexes.</text>
</comment>
<comment type="subunit">
    <text evidence="3 4">Interacts with CTNNB1 (PubMed:11590244). Interacts with PKP2 (PubMed:17535849).</text>
</comment>
<comment type="interaction">
    <interactant intactId="EBI-3937546">
        <id>Q9UI47</id>
    </interactant>
    <interactant intactId="EBI-6179727">
        <id>PRO_0000038596</id>
        <label>gag</label>
        <dbReference type="UniProtKB" id="P04591"/>
    </interactant>
    <organismsDiffer>true</organismsDiffer>
    <experiments>2</experiments>
</comment>
<comment type="interaction">
    <interactant intactId="EBI-21980640">
        <id>Q9UI47-1</id>
    </interactant>
    <interactant intactId="EBI-491549">
        <id>P35222</id>
        <label>CTNNB1</label>
    </interactant>
    <organismsDiffer>false</organismsDiffer>
    <experiments>4</experiments>
</comment>
<comment type="interaction">
    <interactant intactId="EBI-11962928">
        <id>Q9UI47-2</id>
    </interactant>
    <interactant intactId="EBI-11745576">
        <id>Q6PJH3</id>
        <label>AKAP9</label>
    </interactant>
    <organismsDiffer>false</organismsDiffer>
    <experiments>3</experiments>
</comment>
<comment type="interaction">
    <interactant intactId="EBI-11962928">
        <id>Q9UI47-2</id>
    </interactant>
    <interactant intactId="EBI-5661893">
        <id>Q86SG2</id>
        <label>ANKRD23</label>
    </interactant>
    <organismsDiffer>false</organismsDiffer>
    <experiments>3</experiments>
</comment>
<comment type="interaction">
    <interactant intactId="EBI-11962928">
        <id>Q9UI47-2</id>
    </interactant>
    <interactant intactId="EBI-713602">
        <id>Q9BQD7</id>
        <label>ANTKMT</label>
    </interactant>
    <organismsDiffer>false</organismsDiffer>
    <experiments>3</experiments>
</comment>
<comment type="interaction">
    <interactant intactId="EBI-11962928">
        <id>Q9UI47-2</id>
    </interactant>
    <interactant intactId="EBI-12811889">
        <id>Q9Y6H3</id>
        <label>ATP23</label>
    </interactant>
    <organismsDiffer>false</organismsDiffer>
    <experiments>3</experiments>
</comment>
<comment type="interaction">
    <interactant intactId="EBI-11962928">
        <id>Q9UI47-2</id>
    </interactant>
    <interactant intactId="EBI-465872">
        <id>Q6QNY1</id>
        <label>BLOC1S2</label>
    </interactant>
    <organismsDiffer>false</organismsDiffer>
    <experiments>3</experiments>
</comment>
<comment type="interaction">
    <interactant intactId="EBI-11962928">
        <id>Q9UI47-2</id>
    </interactant>
    <interactant intactId="EBI-2548012">
        <id>Q9H2G9</id>
        <label>BLZF1</label>
    </interactant>
    <organismsDiffer>false</organismsDiffer>
    <experiments>3</experiments>
</comment>
<comment type="interaction">
    <interactant intactId="EBI-11962928">
        <id>Q9UI47-2</id>
    </interactant>
    <interactant intactId="EBI-12877892">
        <id>Q8WW18</id>
        <label>C17orf50</label>
    </interactant>
    <organismsDiffer>false</organismsDiffer>
    <experiments>3</experiments>
</comment>
<comment type="interaction">
    <interactant intactId="EBI-11962928">
        <id>Q9UI47-2</id>
    </interactant>
    <interactant intactId="EBI-17212717">
        <id>G5E9W6</id>
        <label>CCDC183</label>
    </interactant>
    <organismsDiffer>false</organismsDiffer>
    <experiments>3</experiments>
</comment>
<comment type="interaction">
    <interactant intactId="EBI-11962928">
        <id>Q9UI47-2</id>
    </interactant>
    <interactant intactId="EBI-5529649">
        <id>Q8N2Z9</id>
        <label>CENPS</label>
    </interactant>
    <organismsDiffer>false</organismsDiffer>
    <experiments>3</experiments>
</comment>
<comment type="interaction">
    <interactant intactId="EBI-11962928">
        <id>Q9UI47-2</id>
    </interactant>
    <interactant intactId="EBI-1050662">
        <id>P12532</id>
        <label>CKMT1B</label>
    </interactant>
    <organismsDiffer>false</organismsDiffer>
    <experiments>3</experiments>
</comment>
<comment type="interaction">
    <interactant intactId="EBI-11962928">
        <id>Q9UI47-2</id>
    </interactant>
    <interactant intactId="EBI-16780661">
        <id>Q9NRP2</id>
        <label>CMC2</label>
    </interactant>
    <organismsDiffer>false</organismsDiffer>
    <experiments>3</experiments>
</comment>
<comment type="interaction">
    <interactant intactId="EBI-11962928">
        <id>Q9UI47-2</id>
    </interactant>
    <interactant intactId="EBI-368382">
        <id>Q9H9E3</id>
        <label>COG4</label>
    </interactant>
    <organismsDiffer>false</organismsDiffer>
    <experiments>3</experiments>
</comment>
<comment type="interaction">
    <interactant intactId="EBI-11962928">
        <id>Q9UI47-2</id>
    </interactant>
    <interactant intactId="EBI-748171">
        <id>O43186</id>
        <label>CRX</label>
    </interactant>
    <organismsDiffer>false</organismsDiffer>
    <experiments>3</experiments>
</comment>
<comment type="interaction">
    <interactant intactId="EBI-11962928">
        <id>Q9UI47-2</id>
    </interactant>
    <interactant intactId="EBI-742054">
        <id>Q96D03</id>
        <label>DDIT4L</label>
    </interactant>
    <organismsDiffer>false</organismsDiffer>
    <experiments>3</experiments>
</comment>
<comment type="interaction">
    <interactant intactId="EBI-11962928">
        <id>Q9UI47-2</id>
    </interactant>
    <interactant intactId="EBI-11988027">
        <id>Q9NRI5-2</id>
        <label>DISC1</label>
    </interactant>
    <organismsDiffer>false</organismsDiffer>
    <experiments>3</experiments>
</comment>
<comment type="interaction">
    <interactant intactId="EBI-11962928">
        <id>Q9UI47-2</id>
    </interactant>
    <interactant intactId="EBI-712452">
        <id>Q9BQ95</id>
        <label>ECSIT</label>
    </interactant>
    <organismsDiffer>false</organismsDiffer>
    <experiments>3</experiments>
</comment>
<comment type="interaction">
    <interactant intactId="EBI-11962928">
        <id>Q9UI47-2</id>
    </interactant>
    <interactant intactId="EBI-724968">
        <id>Q96D98</id>
        <label>EID2B</label>
    </interactant>
    <organismsDiffer>false</organismsDiffer>
    <experiments>3</experiments>
</comment>
<comment type="interaction">
    <interactant intactId="EBI-11962928">
        <id>Q9UI47-2</id>
    </interactant>
    <interactant intactId="EBI-17869840">
        <id>Q96A65-2</id>
        <label>EXOC4</label>
    </interactant>
    <organismsDiffer>false</organismsDiffer>
    <experiments>3</experiments>
</comment>
<comment type="interaction">
    <interactant intactId="EBI-11962928">
        <id>Q9UI47-2</id>
    </interactant>
    <interactant intactId="EBI-1752811">
        <id>Q9BQ89</id>
        <label>FAM110A</label>
    </interactant>
    <organismsDiffer>false</organismsDiffer>
    <experiments>3</experiments>
</comment>
<comment type="interaction">
    <interactant intactId="EBI-11962928">
        <id>Q9UI47-2</id>
    </interactant>
    <interactant intactId="EBI-719941">
        <id>Q3B820</id>
        <label>FAM161A</label>
    </interactant>
    <organismsDiffer>false</organismsDiffer>
    <experiments>3</experiments>
</comment>
<comment type="interaction">
    <interactant intactId="EBI-11962928">
        <id>Q9UI47-2</id>
    </interactant>
    <interactant intactId="EBI-7225287">
        <id>Q96MY7</id>
        <label>FAM161B</label>
    </interactant>
    <organismsDiffer>false</organismsDiffer>
    <experiments>3</experiments>
</comment>
<comment type="interaction">
    <interactant intactId="EBI-11962928">
        <id>Q9UI47-2</id>
    </interactant>
    <interactant intactId="EBI-8468186">
        <id>Q8IZU1</id>
        <label>FAM9A</label>
    </interactant>
    <organismsDiffer>false</organismsDiffer>
    <experiments>3</experiments>
</comment>
<comment type="interaction">
    <interactant intactId="EBI-11962928">
        <id>Q9UI47-2</id>
    </interactant>
    <interactant intactId="EBI-740282">
        <id>Q9NVF7</id>
        <label>FBXO28</label>
    </interactant>
    <organismsDiffer>false</organismsDiffer>
    <experiments>3</experiments>
</comment>
<comment type="interaction">
    <interactant intactId="EBI-11962928">
        <id>Q9UI47-2</id>
    </interactant>
    <interactant intactId="EBI-2857315">
        <id>Q9BRX5</id>
        <label>GINS3</label>
    </interactant>
    <organismsDiffer>false</organismsDiffer>
    <experiments>3</experiments>
</comment>
<comment type="interaction">
    <interactant intactId="EBI-11962928">
        <id>Q9UI47-2</id>
    </interactant>
    <interactant intactId="EBI-357130">
        <id>P62873</id>
        <label>GNB1</label>
    </interactant>
    <organismsDiffer>false</organismsDiffer>
    <experiments>3</experiments>
</comment>
<comment type="interaction">
    <interactant intactId="EBI-11962928">
        <id>Q9UI47-2</id>
    </interactant>
    <interactant intactId="EBI-1052734">
        <id>Q7Z353</id>
        <label>HDX</label>
    </interactant>
    <organismsDiffer>false</organismsDiffer>
    <experiments>3</experiments>
</comment>
<comment type="interaction">
    <interactant intactId="EBI-11962928">
        <id>Q9UI47-2</id>
    </interactant>
    <interactant intactId="EBI-702484">
        <id>P14923</id>
        <label>JUP</label>
    </interactant>
    <organismsDiffer>false</organismsDiffer>
    <experiments>3</experiments>
</comment>
<comment type="interaction">
    <interactant intactId="EBI-11962928">
        <id>Q9UI47-2</id>
    </interactant>
    <interactant intactId="EBI-743591">
        <id>Q9BW62</id>
        <label>KATNAL1</label>
    </interactant>
    <organismsDiffer>false</organismsDiffer>
    <experiments>3</experiments>
</comment>
<comment type="interaction">
    <interactant intactId="EBI-11962928">
        <id>Q9UI47-2</id>
    </interactant>
    <interactant intactId="EBI-9088686">
        <id>Q14847-2</id>
        <label>LASP1</label>
    </interactant>
    <organismsDiffer>false</organismsDiffer>
    <experiments>3</experiments>
</comment>
<comment type="interaction">
    <interactant intactId="EBI-11962928">
        <id>Q9UI47-2</id>
    </interactant>
    <interactant intactId="EBI-949983">
        <id>Q9H992</id>
        <label>MARCHF7</label>
    </interactant>
    <organismsDiffer>false</organismsDiffer>
    <experiments>3</experiments>
</comment>
<comment type="interaction">
    <interactant intactId="EBI-11962928">
        <id>Q9UI47-2</id>
    </interactant>
    <interactant intactId="EBI-12516603">
        <id>Q8WWY6</id>
        <label>MBD3L1</label>
    </interactant>
    <organismsDiffer>false</organismsDiffer>
    <experiments>3</experiments>
</comment>
<comment type="interaction">
    <interactant intactId="EBI-11962928">
        <id>Q9UI47-2</id>
    </interactant>
    <interactant intactId="EBI-11987923">
        <id>P59942</id>
        <label>MCCD1</label>
    </interactant>
    <organismsDiffer>false</organismsDiffer>
    <experiments>3</experiments>
</comment>
<comment type="interaction">
    <interactant intactId="EBI-11962928">
        <id>Q9UI47-2</id>
    </interactant>
    <interactant intactId="EBI-5235884">
        <id>O00566</id>
        <label>MPHOSPH10</label>
    </interactant>
    <organismsDiffer>false</organismsDiffer>
    <experiments>3</experiments>
</comment>
<comment type="interaction">
    <interactant intactId="EBI-11962928">
        <id>Q9UI47-2</id>
    </interactant>
    <interactant intactId="EBI-19157918">
        <id>Q9UJ68</id>
        <label>MSRA</label>
    </interactant>
    <organismsDiffer>false</organismsDiffer>
    <experiments>3</experiments>
</comment>
<comment type="interaction">
    <interactant intactId="EBI-11962928">
        <id>Q9UI47-2</id>
    </interactant>
    <interactant intactId="EBI-3906629">
        <id>P15173</id>
        <label>MYOG</label>
    </interactant>
    <organismsDiffer>false</organismsDiffer>
    <experiments>3</experiments>
</comment>
<comment type="interaction">
    <interactant intactId="EBI-11962928">
        <id>Q9UI47-2</id>
    </interactant>
    <interactant intactId="EBI-8641936">
        <id>Q15742</id>
        <label>NAB2</label>
    </interactant>
    <organismsDiffer>false</organismsDiffer>
    <experiments>3</experiments>
</comment>
<comment type="interaction">
    <interactant intactId="EBI-11962928">
        <id>Q9UI47-2</id>
    </interactant>
    <interactant intactId="EBI-1246238">
        <id>P17568</id>
        <label>NDUFB7</label>
    </interactant>
    <organismsDiffer>false</organismsDiffer>
    <experiments>3</experiments>
</comment>
<comment type="interaction">
    <interactant intactId="EBI-11962928">
        <id>Q9UI47-2</id>
    </interactant>
    <interactant intactId="EBI-536879">
        <id>O43482</id>
        <label>OIP5</label>
    </interactant>
    <organismsDiffer>false</organismsDiffer>
    <experiments>3</experiments>
</comment>
<comment type="interaction">
    <interactant intactId="EBI-11962928">
        <id>Q9UI47-2</id>
    </interactant>
    <interactant intactId="EBI-374957">
        <id>Q13416</id>
        <label>ORC2</label>
    </interactant>
    <organismsDiffer>false</organismsDiffer>
    <experiments>3</experiments>
</comment>
<comment type="interaction">
    <interactant intactId="EBI-11962928">
        <id>Q9UI47-2</id>
    </interactant>
    <interactant intactId="EBI-747278">
        <id>P26367</id>
        <label>PAX6</label>
    </interactant>
    <organismsDiffer>false</organismsDiffer>
    <experiments>3</experiments>
</comment>
<comment type="interaction">
    <interactant intactId="EBI-11962928">
        <id>Q9UI47-2</id>
    </interactant>
    <interactant intactId="EBI-2876622">
        <id>Q9UPG8</id>
        <label>PLAGL2</label>
    </interactant>
    <organismsDiffer>false</organismsDiffer>
    <experiments>3</experiments>
</comment>
<comment type="interaction">
    <interactant intactId="EBI-11962928">
        <id>Q9UI47-2</id>
    </interactant>
    <interactant intactId="EBI-302345">
        <id>Q8ND90</id>
        <label>PNMA1</label>
    </interactant>
    <organismsDiffer>false</organismsDiffer>
    <experiments>3</experiments>
</comment>
<comment type="interaction">
    <interactant intactId="EBI-11962928">
        <id>Q9UI47-2</id>
    </interactant>
    <interactant intactId="EBI-10171633">
        <id>Q96PV4</id>
        <label>PNMA5</label>
    </interactant>
    <organismsDiffer>false</organismsDiffer>
    <experiments>3</experiments>
</comment>
<comment type="interaction">
    <interactant intactId="EBI-11962928">
        <id>Q9UI47-2</id>
    </interactant>
    <interactant intactId="EBI-12029004">
        <id>P78424</id>
        <label>POU6F2</label>
    </interactant>
    <organismsDiffer>false</organismsDiffer>
    <experiments>3</experiments>
</comment>
<comment type="interaction">
    <interactant intactId="EBI-11962928">
        <id>Q9UI47-2</id>
    </interactant>
    <interactant intactId="EBI-12944296">
        <id>P85299-2</id>
        <label>PRR5</label>
    </interactant>
    <organismsDiffer>false</organismsDiffer>
    <experiments>3</experiments>
</comment>
<comment type="interaction">
    <interactant intactId="EBI-11962928">
        <id>Q9UI47-2</id>
    </interactant>
    <interactant intactId="EBI-10829018">
        <id>Q04864-2</id>
        <label>REL</label>
    </interactant>
    <organismsDiffer>false</organismsDiffer>
    <experiments>3</experiments>
</comment>
<comment type="interaction">
    <interactant intactId="EBI-11962928">
        <id>Q9UI47-2</id>
    </interactant>
    <interactant intactId="EBI-10226430">
        <id>Q0D2K3</id>
        <label>RIPPLY1</label>
    </interactant>
    <organismsDiffer>false</organismsDiffer>
    <experiments>3</experiments>
</comment>
<comment type="interaction">
    <interactant intactId="EBI-11962928">
        <id>Q9UI47-2</id>
    </interactant>
    <interactant intactId="EBI-358122">
        <id>P32969</id>
        <label>RPL9P9</label>
    </interactant>
    <organismsDiffer>false</organismsDiffer>
    <experiments>3</experiments>
</comment>
<comment type="interaction">
    <interactant intactId="EBI-11962928">
        <id>Q9UI47-2</id>
    </interactant>
    <interactant intactId="EBI-73869">
        <id>O75582</id>
        <label>RPS6KA5</label>
    </interactant>
    <organismsDiffer>false</organismsDiffer>
    <experiments>3</experiments>
</comment>
<comment type="interaction">
    <interactant intactId="EBI-11962928">
        <id>Q9UI47-2</id>
    </interactant>
    <interactant intactId="EBI-2822051">
        <id>Q14140</id>
        <label>SERTAD2</label>
    </interactant>
    <organismsDiffer>false</organismsDiffer>
    <experiments>3</experiments>
</comment>
<comment type="interaction">
    <interactant intactId="EBI-11962928">
        <id>Q9UI47-2</id>
    </interactant>
    <interactant intactId="EBI-748621">
        <id>Q9UJW9</id>
        <label>SERTAD3</label>
    </interactant>
    <organismsDiffer>false</organismsDiffer>
    <experiments>3</experiments>
</comment>
<comment type="interaction">
    <interactant intactId="EBI-11962928">
        <id>Q9UI47-2</id>
    </interactant>
    <interactant intactId="EBI-3923692">
        <id>Q496A3</id>
        <label>SPATS1</label>
    </interactant>
    <organismsDiffer>false</organismsDiffer>
    <experiments>3</experiments>
</comment>
<comment type="interaction">
    <interactant intactId="EBI-11962928">
        <id>Q9UI47-2</id>
    </interactant>
    <interactant intactId="EBI-714194">
        <id>Q93045</id>
        <label>STMN2</label>
    </interactant>
    <organismsDiffer>false</organismsDiffer>
    <experiments>3</experiments>
</comment>
<comment type="interaction">
    <interactant intactId="EBI-11962928">
        <id>Q9UI47-2</id>
    </interactant>
    <interactant intactId="EBI-725557">
        <id>Q9NZ72</id>
        <label>STMN3</label>
    </interactant>
    <organismsDiffer>false</organismsDiffer>
    <experiments>3</experiments>
</comment>
<comment type="interaction">
    <interactant intactId="EBI-11962928">
        <id>Q9UI47-2</id>
    </interactant>
    <interactant intactId="EBI-745958">
        <id>Q5VWN6</id>
        <label>TASOR2</label>
    </interactant>
    <organismsDiffer>false</organismsDiffer>
    <experiments>3</experiments>
</comment>
<comment type="interaction">
    <interactant intactId="EBI-11962928">
        <id>Q9UI47-2</id>
    </interactant>
    <interactant intactId="EBI-3939165">
        <id>O43711</id>
        <label>TLX3</label>
    </interactant>
    <organismsDiffer>false</organismsDiffer>
    <experiments>3</experiments>
</comment>
<comment type="interaction">
    <interactant intactId="EBI-11962928">
        <id>Q9UI47-2</id>
    </interactant>
    <interactant intactId="EBI-746692">
        <id>P19237</id>
        <label>TNNI1</label>
    </interactant>
    <organismsDiffer>false</organismsDiffer>
    <experiments>3</experiments>
</comment>
<comment type="interaction">
    <interactant intactId="EBI-11962928">
        <id>Q9UI47-2</id>
    </interactant>
    <interactant intactId="EBI-7746394">
        <id>P48788</id>
        <label>TNNI2</label>
    </interactant>
    <organismsDiffer>false</organismsDiffer>
    <experiments>3</experiments>
</comment>
<comment type="interaction">
    <interactant intactId="EBI-11962928">
        <id>Q9UI47-2</id>
    </interactant>
    <interactant intactId="EBI-2130429">
        <id>Q9BYV2</id>
        <label>TRIM54</label>
    </interactant>
    <organismsDiffer>false</organismsDiffer>
    <experiments>3</experiments>
</comment>
<comment type="interaction">
    <interactant intactId="EBI-11962928">
        <id>Q9UI47-2</id>
    </interactant>
    <interactant intactId="EBI-9090990">
        <id>Q5W5X9-3</id>
        <label>TTC23</label>
    </interactant>
    <organismsDiffer>false</organismsDiffer>
    <experiments>3</experiments>
</comment>
<comment type="interaction">
    <interactant intactId="EBI-11962928">
        <id>Q9UI47-2</id>
    </interactant>
    <interactant intactId="EBI-18122152">
        <id>Q6F5E7</id>
        <label>TXNRD3NB</label>
    </interactant>
    <organismsDiffer>false</organismsDiffer>
    <experiments>3</experiments>
</comment>
<comment type="interaction">
    <interactant intactId="EBI-11962928">
        <id>Q9UI47-2</id>
    </interactant>
    <interactant intactId="EBI-739895">
        <id>Q8N6Y0</id>
        <label>USHBP1</label>
    </interactant>
    <organismsDiffer>false</organismsDiffer>
    <experiments>3</experiments>
</comment>
<comment type="interaction">
    <interactant intactId="EBI-11962928">
        <id>Q9UI47-2</id>
    </interactant>
    <interactant intactId="EBI-12320391">
        <id>P01282-2</id>
        <label>VIP</label>
    </interactant>
    <organismsDiffer>false</organismsDiffer>
    <experiments>3</experiments>
</comment>
<comment type="interaction">
    <interactant intactId="EBI-11962928">
        <id>Q9UI47-2</id>
    </interactant>
    <interactant intactId="EBI-746479">
        <id>O60844</id>
        <label>ZG16</label>
    </interactant>
    <organismsDiffer>false</organismsDiffer>
    <experiments>3</experiments>
</comment>
<comment type="interaction">
    <interactant intactId="EBI-11962928">
        <id>Q9UI47-2</id>
    </interactant>
    <interactant intactId="EBI-10183064">
        <id>Q8N5A5-2</id>
        <label>ZGPAT</label>
    </interactant>
    <organismsDiffer>false</organismsDiffer>
    <experiments>3</experiments>
</comment>
<comment type="interaction">
    <interactant intactId="EBI-11962928">
        <id>Q9UI47-2</id>
    </interactant>
    <interactant intactId="EBI-12884200">
        <id>P17023</id>
        <label>ZNF19</label>
    </interactant>
    <organismsDiffer>false</organismsDiffer>
    <experiments>3</experiments>
</comment>
<comment type="interaction">
    <interactant intactId="EBI-11962928">
        <id>Q9UI47-2</id>
    </interactant>
    <interactant intactId="EBI-743265">
        <id>Q9BUY5</id>
        <label>ZNF426</label>
    </interactant>
    <organismsDiffer>false</organismsDiffer>
    <experiments>3</experiments>
</comment>
<comment type="interaction">
    <interactant intactId="EBI-11962928">
        <id>Q9UI47-2</id>
    </interactant>
    <interactant intactId="EBI-17269964">
        <id>Q6S9Z5</id>
        <label>ZNF474</label>
    </interactant>
    <organismsDiffer>false</organismsDiffer>
    <experiments>3</experiments>
</comment>
<comment type="interaction">
    <interactant intactId="EBI-11962928">
        <id>Q9UI47-2</id>
    </interactant>
    <interactant intactId="EBI-2555731">
        <id>Q9H707</id>
        <label>ZNF552</label>
    </interactant>
    <organismsDiffer>false</organismsDiffer>
    <experiments>3</experiments>
</comment>
<comment type="interaction">
    <interactant intactId="EBI-11962928">
        <id>Q9UI47-2</id>
    </interactant>
    <interactant intactId="EBI-4395669">
        <id>Q6ZNG0</id>
        <label>ZNF620</label>
    </interactant>
    <organismsDiffer>false</organismsDiffer>
    <experiments>3</experiments>
</comment>
<comment type="interaction">
    <interactant intactId="EBI-11962928">
        <id>Q9UI47-2</id>
    </interactant>
    <interactant intactId="EBI-10255155">
        <id>Q6ZS27-3</id>
        <label>ZNF662</label>
    </interactant>
    <organismsDiffer>false</organismsDiffer>
    <experiments>3</experiments>
</comment>
<comment type="interaction">
    <interactant intactId="EBI-11962928">
        <id>Q9UI47-2</id>
    </interactant>
    <interactant intactId="EBI-17234977">
        <id>A0A1U9X8X8</id>
    </interactant>
    <organismsDiffer>false</organismsDiffer>
    <experiments>3</experiments>
</comment>
<comment type="interaction">
    <interactant intactId="EBI-11962928">
        <id>Q9UI47-2</id>
    </interactant>
    <interactant intactId="EBI-10255097">
        <id>Q6ZN96</id>
    </interactant>
    <organismsDiffer>false</organismsDiffer>
    <experiments>3</experiments>
</comment>
<comment type="subcellular location">
    <subcellularLocation>
        <location evidence="8">Cytoplasm</location>
        <location evidence="8">Cytoskeleton</location>
    </subcellularLocation>
    <subcellularLocation>
        <location evidence="1">Cell junction</location>
        <location evidence="1">Desmosome</location>
    </subcellularLocation>
    <text evidence="1 3">Localizes to intercalated disks of cardiomyocytes and in peritubular myoid cells of testis, and colocalizes with CTNNA1 and CTNNA2. Colocalizes with PKP2 at intercalated disks in the heart (By similarity).</text>
</comment>
<comment type="alternative products">
    <event type="alternative splicing"/>
    <isoform>
        <id>Q9UI47-1</id>
        <name evidence="3">1</name>
        <sequence type="displayed"/>
    </isoform>
    <isoform>
        <id>Q9UI47-2</id>
        <name evidence="8">2</name>
        <sequence type="described" ref="VSP_051852 VSP_051853"/>
    </isoform>
</comment>
<comment type="tissue specificity">
    <text evidence="3">Predominantly expressed in heart and testis. Expressed at lower levels in brain, kidney, liver and skeletal muscle.</text>
</comment>
<comment type="disease" evidence="5">
    <disease id="DI-04014">
        <name>Arrhythmogenic right ventricular dysplasia, familial, 13</name>
        <acronym>ARVD13</acronym>
        <description>A congenital heart disease characterized by infiltration of adipose and fibrous tissue into the right ventricle and loss of myocardial cells, resulting in ventricular and supraventricular arrhythmias.</description>
        <dbReference type="MIM" id="615616"/>
    </disease>
    <text>The disease is caused by variants affecting the gene represented in this entry.</text>
</comment>
<comment type="similarity">
    <text evidence="2">Belongs to the vinculin/alpha-catenin family.</text>
</comment>